<feature type="chain" id="PRO_0000203487" description="20S rRNA accumulation protein 4">
    <location>
        <begin position="1"/>
        <end position="408"/>
    </location>
</feature>
<feature type="region of interest" description="Disordered" evidence="1">
    <location>
        <begin position="1"/>
        <end position="20"/>
    </location>
</feature>
<feature type="region of interest" description="Disordered" evidence="1">
    <location>
        <begin position="190"/>
        <end position="214"/>
    </location>
</feature>
<feature type="compositionally biased region" description="Basic and acidic residues" evidence="1">
    <location>
        <begin position="1"/>
        <end position="17"/>
    </location>
</feature>
<feature type="compositionally biased region" description="Basic and acidic residues" evidence="1">
    <location>
        <begin position="199"/>
        <end position="208"/>
    </location>
</feature>
<organism>
    <name type="scientific">Saccharomyces cerevisiae (strain ATCC 204508 / S288c)</name>
    <name type="common">Baker's yeast</name>
    <dbReference type="NCBI Taxonomy" id="559292"/>
    <lineage>
        <taxon>Eukaryota</taxon>
        <taxon>Fungi</taxon>
        <taxon>Dikarya</taxon>
        <taxon>Ascomycota</taxon>
        <taxon>Saccharomycotina</taxon>
        <taxon>Saccharomycetes</taxon>
        <taxon>Saccharomycetales</taxon>
        <taxon>Saccharomycetaceae</taxon>
        <taxon>Saccharomyces</taxon>
    </lineage>
</organism>
<proteinExistence type="evidence at protein level"/>
<reference key="1">
    <citation type="journal article" date="1997" name="Nature">
        <title>The nucleotide sequence of Saccharomyces cerevisiae chromosome XV.</title>
        <authorList>
            <person name="Dujon B."/>
            <person name="Albermann K."/>
            <person name="Aldea M."/>
            <person name="Alexandraki D."/>
            <person name="Ansorge W."/>
            <person name="Arino J."/>
            <person name="Benes V."/>
            <person name="Bohn C."/>
            <person name="Bolotin-Fukuhara M."/>
            <person name="Bordonne R."/>
            <person name="Boyer J."/>
            <person name="Camasses A."/>
            <person name="Casamayor A."/>
            <person name="Casas C."/>
            <person name="Cheret G."/>
            <person name="Cziepluch C."/>
            <person name="Daignan-Fornier B."/>
            <person name="Dang V.-D."/>
            <person name="de Haan M."/>
            <person name="Delius H."/>
            <person name="Durand P."/>
            <person name="Fairhead C."/>
            <person name="Feldmann H."/>
            <person name="Gaillon L."/>
            <person name="Galisson F."/>
            <person name="Gamo F.-J."/>
            <person name="Gancedo C."/>
            <person name="Goffeau A."/>
            <person name="Goulding S.E."/>
            <person name="Grivell L.A."/>
            <person name="Habbig B."/>
            <person name="Hand N.J."/>
            <person name="Hani J."/>
            <person name="Hattenhorst U."/>
            <person name="Hebling U."/>
            <person name="Hernando Y."/>
            <person name="Herrero E."/>
            <person name="Heumann K."/>
            <person name="Hiesel R."/>
            <person name="Hilger F."/>
            <person name="Hofmann B."/>
            <person name="Hollenberg C.P."/>
            <person name="Hughes B."/>
            <person name="Jauniaux J.-C."/>
            <person name="Kalogeropoulos A."/>
            <person name="Katsoulou C."/>
            <person name="Kordes E."/>
            <person name="Lafuente M.J."/>
            <person name="Landt O."/>
            <person name="Louis E.J."/>
            <person name="Maarse A.C."/>
            <person name="Madania A."/>
            <person name="Mannhaupt G."/>
            <person name="Marck C."/>
            <person name="Martin R.P."/>
            <person name="Mewes H.-W."/>
            <person name="Michaux G."/>
            <person name="Paces V."/>
            <person name="Parle-McDermott A.G."/>
            <person name="Pearson B.M."/>
            <person name="Perrin A."/>
            <person name="Pettersson B."/>
            <person name="Poch O."/>
            <person name="Pohl T.M."/>
            <person name="Poirey R."/>
            <person name="Portetelle D."/>
            <person name="Pujol A."/>
            <person name="Purnelle B."/>
            <person name="Ramezani Rad M."/>
            <person name="Rechmann S."/>
            <person name="Schwager C."/>
            <person name="Schweizer M."/>
            <person name="Sor F."/>
            <person name="Sterky F."/>
            <person name="Tarassov I.A."/>
            <person name="Teodoru C."/>
            <person name="Tettelin H."/>
            <person name="Thierry A."/>
            <person name="Tobiasch E."/>
            <person name="Tzermia M."/>
            <person name="Uhlen M."/>
            <person name="Unseld M."/>
            <person name="Valens M."/>
            <person name="Vandenbol M."/>
            <person name="Vetter I."/>
            <person name="Vlcek C."/>
            <person name="Voet M."/>
            <person name="Volckaert G."/>
            <person name="Voss H."/>
            <person name="Wambutt R."/>
            <person name="Wedler H."/>
            <person name="Wiemann S."/>
            <person name="Winsor B."/>
            <person name="Wolfe K.H."/>
            <person name="Zollner A."/>
            <person name="Zumstein E."/>
            <person name="Kleine K."/>
        </authorList>
    </citation>
    <scope>NUCLEOTIDE SEQUENCE [LARGE SCALE GENOMIC DNA]</scope>
    <source>
        <strain>ATCC 204508 / S288c</strain>
    </source>
</reference>
<reference key="2">
    <citation type="journal article" date="2014" name="G3 (Bethesda)">
        <title>The reference genome sequence of Saccharomyces cerevisiae: Then and now.</title>
        <authorList>
            <person name="Engel S.R."/>
            <person name="Dietrich F.S."/>
            <person name="Fisk D.G."/>
            <person name="Binkley G."/>
            <person name="Balakrishnan R."/>
            <person name="Costanzo M.C."/>
            <person name="Dwight S.S."/>
            <person name="Hitz B.C."/>
            <person name="Karra K."/>
            <person name="Nash R.S."/>
            <person name="Weng S."/>
            <person name="Wong E.D."/>
            <person name="Lloyd P."/>
            <person name="Skrzypek M.S."/>
            <person name="Miyasato S.R."/>
            <person name="Simison M."/>
            <person name="Cherry J.M."/>
        </authorList>
    </citation>
    <scope>GENOME REANNOTATION</scope>
    <source>
        <strain>ATCC 204508 / S288c</strain>
    </source>
</reference>
<reference key="3">
    <citation type="journal article" date="2007" name="Genome Res.">
        <title>Approaching a complete repository of sequence-verified protein-encoding clones for Saccharomyces cerevisiae.</title>
        <authorList>
            <person name="Hu Y."/>
            <person name="Rolfs A."/>
            <person name="Bhullar B."/>
            <person name="Murthy T.V.S."/>
            <person name="Zhu C."/>
            <person name="Berger M.F."/>
            <person name="Camargo A.A."/>
            <person name="Kelley F."/>
            <person name="McCarron S."/>
            <person name="Jepson D."/>
            <person name="Richardson A."/>
            <person name="Raphael J."/>
            <person name="Moreira D."/>
            <person name="Taycher E."/>
            <person name="Zuo D."/>
            <person name="Mohr S."/>
            <person name="Kane M.F."/>
            <person name="Williamson J."/>
            <person name="Simpson A.J.G."/>
            <person name="Bulyk M.L."/>
            <person name="Harlow E."/>
            <person name="Marsischky G."/>
            <person name="Kolodner R.D."/>
            <person name="LaBaer J."/>
        </authorList>
    </citation>
    <scope>NUCLEOTIDE SEQUENCE [GENOMIC DNA]</scope>
    <source>
        <strain>ATCC 204508 / S288c</strain>
    </source>
</reference>
<reference key="4">
    <citation type="journal article" date="1991" name="Eur. J. Biochem.">
        <title>Mitochondrial translational-initiation and elongation factors in Saccharomyces cerevisiae.</title>
        <authorList>
            <person name="Vambutas A."/>
            <person name="Ackerman S.H."/>
            <person name="Tzagoloff A."/>
        </authorList>
    </citation>
    <scope>NUCLEOTIDE SEQUENCE [GENOMIC DNA] OF 284-408</scope>
</reference>
<reference key="5">
    <citation type="journal article" date="2003" name="Nature">
        <title>Global analysis of protein localization in budding yeast.</title>
        <authorList>
            <person name="Huh W.-K."/>
            <person name="Falvo J.V."/>
            <person name="Gerke L.C."/>
            <person name="Carroll A.S."/>
            <person name="Howson R.W."/>
            <person name="Weissman J.S."/>
            <person name="O'Shea E.K."/>
        </authorList>
    </citation>
    <scope>SUBCELLULAR LOCATION [LARGE SCALE ANALYSIS]</scope>
</reference>
<reference key="6">
    <citation type="journal article" date="2003" name="Nature">
        <title>Global analysis of protein expression in yeast.</title>
        <authorList>
            <person name="Ghaemmaghami S."/>
            <person name="Huh W.-K."/>
            <person name="Bower K."/>
            <person name="Howson R.W."/>
            <person name="Belle A."/>
            <person name="Dephoure N."/>
            <person name="O'Shea E.K."/>
            <person name="Weissman J.S."/>
        </authorList>
    </citation>
    <scope>LEVEL OF PROTEIN EXPRESSION [LARGE SCALE ANALYSIS]</scope>
</reference>
<reference key="7">
    <citation type="journal article" date="2008" name="Mol. Cell. Proteomics">
        <title>A multidimensional chromatography technology for in-depth phosphoproteome analysis.</title>
        <authorList>
            <person name="Albuquerque C.P."/>
            <person name="Smolka M.B."/>
            <person name="Payne S.H."/>
            <person name="Bafna V."/>
            <person name="Eng J."/>
            <person name="Zhou H."/>
        </authorList>
    </citation>
    <scope>IDENTIFICATION BY MASS SPECTROMETRY [LARGE SCALE ANALYSIS]</scope>
</reference>
<reference key="8">
    <citation type="journal article" date="2009" name="PLoS Biol.">
        <title>Rational extension of the ribosome biogenesis pathway using network-guided genetics.</title>
        <authorList>
            <person name="Li Z."/>
            <person name="Lee I."/>
            <person name="Moradi E."/>
            <person name="Hung N.J."/>
            <person name="Johnson A.W."/>
            <person name="Marcotte E.M."/>
        </authorList>
    </citation>
    <scope>FUNCTION</scope>
</reference>
<reference key="9">
    <citation type="journal article" date="2009" name="Science">
        <title>Global analysis of Cdk1 substrate phosphorylation sites provides insights into evolution.</title>
        <authorList>
            <person name="Holt L.J."/>
            <person name="Tuch B.B."/>
            <person name="Villen J."/>
            <person name="Johnson A.D."/>
            <person name="Gygi S.P."/>
            <person name="Morgan D.O."/>
        </authorList>
    </citation>
    <scope>IDENTIFICATION BY MASS SPECTROMETRY [LARGE SCALE ANALYSIS]</scope>
</reference>
<evidence type="ECO:0000256" key="1">
    <source>
        <dbReference type="SAM" id="MobiDB-lite"/>
    </source>
</evidence>
<evidence type="ECO:0000269" key="2">
    <source>
    </source>
</evidence>
<evidence type="ECO:0000269" key="3">
    <source>
    </source>
</evidence>
<evidence type="ECO:0000269" key="4">
    <source>
    </source>
</evidence>
<evidence type="ECO:0000305" key="5"/>
<comment type="function">
    <text evidence="4">Required for processing of the 20S pre-rRNA at site D to generate mature 18S rRNA.</text>
</comment>
<comment type="subcellular location">
    <subcellularLocation>
        <location evidence="2">Cytoplasm</location>
    </subcellularLocation>
</comment>
<comment type="miscellaneous">
    <text evidence="3">Present with 125 molecules/cell in log phase SD medium.</text>
</comment>
<comment type="similarity">
    <text evidence="5">Belongs to the TSR4 family.</text>
</comment>
<keyword id="KW-0963">Cytoplasm</keyword>
<keyword id="KW-1185">Reference proteome</keyword>
<keyword id="KW-0698">rRNA processing</keyword>
<accession>P25040</accession>
<accession>D6W243</accession>
<sequence>MSKIEELPPSDTDDHSYSSKPGDVFLAFVDAPVKETDDILVEDSFIGGEPKWLHPDSEPPAELLKCGACKSADNMKLLLQAFSPLDDEQMSAIQQRLGINNMSYINPQDDRVLYVFLCTECQRKGNSVRCIRGVKKNKNVDSLSEKMASTSLEKDFQINPFDLSNNSDSKCNAFSSNPFGGANANPFGADSINSNISQSKDEGKKKESATVSAKTARKLHDLQKDKEYDGNKCFKSCLLYVEEETFKNKKPAHLQLPKNLKIDKEALDLTGDEDLEKDPIKLDPRTEKLSKFLDDDTFQKFQEVVGYNPLQVLRYDLGGKPLLYAETKVDILSTVPRPGYNPSSQRIFEMQLMPKMIFDLEEVVSVDNGMEWGTILVFTDVENYMPEFDEHGVGYVEECVKVQWESRT</sequence>
<protein>
    <recommendedName>
        <fullName>20S rRNA accumulation protein 4</fullName>
    </recommendedName>
</protein>
<name>TSR4_YEAST</name>
<gene>
    <name type="primary">TSR4</name>
    <name type="ordered locus">YOL022C</name>
</gene>
<dbReference type="EMBL" id="Z74764">
    <property type="protein sequence ID" value="CAA99022.1"/>
    <property type="molecule type" value="Genomic_DNA"/>
</dbReference>
<dbReference type="EMBL" id="AY558025">
    <property type="protein sequence ID" value="AAS56351.1"/>
    <property type="molecule type" value="Genomic_DNA"/>
</dbReference>
<dbReference type="EMBL" id="X58379">
    <property type="protein sequence ID" value="CAA41269.1"/>
    <property type="molecule type" value="Genomic_DNA"/>
</dbReference>
<dbReference type="EMBL" id="BK006948">
    <property type="protein sequence ID" value="DAA10759.1"/>
    <property type="molecule type" value="Genomic_DNA"/>
</dbReference>
<dbReference type="PIR" id="S66705">
    <property type="entry name" value="S66705"/>
</dbReference>
<dbReference type="RefSeq" id="NP_014620.1">
    <property type="nucleotide sequence ID" value="NM_001183276.2"/>
</dbReference>
<dbReference type="BioGRID" id="34379">
    <property type="interactions" value="65"/>
</dbReference>
<dbReference type="DIP" id="DIP-5322N"/>
<dbReference type="FunCoup" id="P25040">
    <property type="interactions" value="415"/>
</dbReference>
<dbReference type="IntAct" id="P25040">
    <property type="interactions" value="13"/>
</dbReference>
<dbReference type="MINT" id="P25040"/>
<dbReference type="STRING" id="4932.YOL022C"/>
<dbReference type="iPTMnet" id="P25040"/>
<dbReference type="PaxDb" id="4932-YOL022C"/>
<dbReference type="PeptideAtlas" id="P25040"/>
<dbReference type="EnsemblFungi" id="YOL022C_mRNA">
    <property type="protein sequence ID" value="YOL022C"/>
    <property type="gene ID" value="YOL022C"/>
</dbReference>
<dbReference type="GeneID" id="854136"/>
<dbReference type="KEGG" id="sce:YOL022C"/>
<dbReference type="AGR" id="SGD:S000005382"/>
<dbReference type="SGD" id="S000005382">
    <property type="gene designation" value="TSR4"/>
</dbReference>
<dbReference type="VEuPathDB" id="FungiDB:YOL022C"/>
<dbReference type="eggNOG" id="KOG2061">
    <property type="taxonomic scope" value="Eukaryota"/>
</dbReference>
<dbReference type="GeneTree" id="ENSGT00940000156603"/>
<dbReference type="HOGENOM" id="CLU_031771_0_0_1"/>
<dbReference type="InParanoid" id="P25040"/>
<dbReference type="OMA" id="LMPKMIL"/>
<dbReference type="OrthoDB" id="443682at2759"/>
<dbReference type="BioCyc" id="YEAST:G3O-33438-MONOMER"/>
<dbReference type="BioGRID-ORCS" id="854136">
    <property type="hits" value="6 hits in 10 CRISPR screens"/>
</dbReference>
<dbReference type="PRO" id="PR:P25040"/>
<dbReference type="Proteomes" id="UP000002311">
    <property type="component" value="Chromosome XV"/>
</dbReference>
<dbReference type="RNAct" id="P25040">
    <property type="molecule type" value="protein"/>
</dbReference>
<dbReference type="GO" id="GO:0005737">
    <property type="term" value="C:cytoplasm"/>
    <property type="evidence" value="ECO:0000314"/>
    <property type="project" value="SGD"/>
</dbReference>
<dbReference type="GO" id="GO:0051082">
    <property type="term" value="F:unfolded protein binding"/>
    <property type="evidence" value="ECO:0000314"/>
    <property type="project" value="SGD"/>
</dbReference>
<dbReference type="GO" id="GO:0030490">
    <property type="term" value="P:maturation of SSU-rRNA"/>
    <property type="evidence" value="ECO:0000315"/>
    <property type="project" value="SGD"/>
</dbReference>
<dbReference type="GO" id="GO:0042274">
    <property type="term" value="P:ribosomal small subunit biogenesis"/>
    <property type="evidence" value="ECO:0000315"/>
    <property type="project" value="SGD"/>
</dbReference>
<dbReference type="InterPro" id="IPR007320">
    <property type="entry name" value="PDCD2_C"/>
</dbReference>
<dbReference type="PANTHER" id="PTHR47524">
    <property type="entry name" value="20S RRNA ACCUMULATION PROTEIN 4"/>
    <property type="match status" value="1"/>
</dbReference>
<dbReference type="PANTHER" id="PTHR47524:SF1">
    <property type="entry name" value="20S RRNA ACCUMULATION PROTEIN 4"/>
    <property type="match status" value="1"/>
</dbReference>
<dbReference type="Pfam" id="PF04194">
    <property type="entry name" value="PDCD2_C"/>
    <property type="match status" value="1"/>
</dbReference>